<proteinExistence type="inferred from homology"/>
<protein>
    <recommendedName>
        <fullName>UPF0337 protein PP_2059</fullName>
    </recommendedName>
</protein>
<feature type="chain" id="PRO_0000210017" description="UPF0337 protein PP_2059">
    <location>
        <begin position="1"/>
        <end position="82"/>
    </location>
</feature>
<name>Y2059_PSEPK</name>
<comment type="similarity">
    <text evidence="1">Belongs to the UPF0337 (CsbD) family.</text>
</comment>
<evidence type="ECO:0000305" key="1"/>
<keyword id="KW-1185">Reference proteome</keyword>
<sequence length="82" mass="8687">MKREQIEGVAEDLAGKAQSAVGRLVEDPALEAEGDARQAAGQVTKTYGDTLDTVSSFVKEKPFAALAITAAVTLVVSRLLRR</sequence>
<reference key="1">
    <citation type="journal article" date="2002" name="Environ. Microbiol.">
        <title>Complete genome sequence and comparative analysis of the metabolically versatile Pseudomonas putida KT2440.</title>
        <authorList>
            <person name="Nelson K.E."/>
            <person name="Weinel C."/>
            <person name="Paulsen I.T."/>
            <person name="Dodson R.J."/>
            <person name="Hilbert H."/>
            <person name="Martins dos Santos V.A.P."/>
            <person name="Fouts D.E."/>
            <person name="Gill S.R."/>
            <person name="Pop M."/>
            <person name="Holmes M."/>
            <person name="Brinkac L.M."/>
            <person name="Beanan M.J."/>
            <person name="DeBoy R.T."/>
            <person name="Daugherty S.C."/>
            <person name="Kolonay J.F."/>
            <person name="Madupu R."/>
            <person name="Nelson W.C."/>
            <person name="White O."/>
            <person name="Peterson J.D."/>
            <person name="Khouri H.M."/>
            <person name="Hance I."/>
            <person name="Chris Lee P."/>
            <person name="Holtzapple E.K."/>
            <person name="Scanlan D."/>
            <person name="Tran K."/>
            <person name="Moazzez A."/>
            <person name="Utterback T.R."/>
            <person name="Rizzo M."/>
            <person name="Lee K."/>
            <person name="Kosack D."/>
            <person name="Moestl D."/>
            <person name="Wedler H."/>
            <person name="Lauber J."/>
            <person name="Stjepandic D."/>
            <person name="Hoheisel J."/>
            <person name="Straetz M."/>
            <person name="Heim S."/>
            <person name="Kiewitz C."/>
            <person name="Eisen J.A."/>
            <person name="Timmis K.N."/>
            <person name="Duesterhoeft A."/>
            <person name="Tuemmler B."/>
            <person name="Fraser C.M."/>
        </authorList>
    </citation>
    <scope>NUCLEOTIDE SEQUENCE [LARGE SCALE GENOMIC DNA]</scope>
    <source>
        <strain>ATCC 47054 / DSM 6125 / CFBP 8728 / NCIMB 11950 / KT2440</strain>
    </source>
</reference>
<accession>Q88L76</accession>
<gene>
    <name type="ordered locus">PP_2059</name>
</gene>
<organism>
    <name type="scientific">Pseudomonas putida (strain ATCC 47054 / DSM 6125 / CFBP 8728 / NCIMB 11950 / KT2440)</name>
    <dbReference type="NCBI Taxonomy" id="160488"/>
    <lineage>
        <taxon>Bacteria</taxon>
        <taxon>Pseudomonadati</taxon>
        <taxon>Pseudomonadota</taxon>
        <taxon>Gammaproteobacteria</taxon>
        <taxon>Pseudomonadales</taxon>
        <taxon>Pseudomonadaceae</taxon>
        <taxon>Pseudomonas</taxon>
    </lineage>
</organism>
<dbReference type="EMBL" id="AE015451">
    <property type="protein sequence ID" value="AAN67673.1"/>
    <property type="molecule type" value="Genomic_DNA"/>
</dbReference>
<dbReference type="RefSeq" id="NP_744209.1">
    <property type="nucleotide sequence ID" value="NC_002947.4"/>
</dbReference>
<dbReference type="RefSeq" id="WP_003247275.1">
    <property type="nucleotide sequence ID" value="NZ_CP169744.1"/>
</dbReference>
<dbReference type="SMR" id="Q88L76"/>
<dbReference type="STRING" id="160488.PP_2059"/>
<dbReference type="PaxDb" id="160488-PP_2059"/>
<dbReference type="KEGG" id="ppu:PP_2059"/>
<dbReference type="PATRIC" id="fig|160488.4.peg.2171"/>
<dbReference type="eggNOG" id="COG3237">
    <property type="taxonomic scope" value="Bacteria"/>
</dbReference>
<dbReference type="HOGENOM" id="CLU_135567_2_2_6"/>
<dbReference type="OrthoDB" id="6183264at2"/>
<dbReference type="PhylomeDB" id="Q88L76"/>
<dbReference type="BioCyc" id="PPUT160488:G1G01-2197-MONOMER"/>
<dbReference type="Proteomes" id="UP000000556">
    <property type="component" value="Chromosome"/>
</dbReference>
<dbReference type="Gene3D" id="1.10.1470.10">
    <property type="entry name" value="YjbJ"/>
    <property type="match status" value="1"/>
</dbReference>
<dbReference type="InterPro" id="IPR008462">
    <property type="entry name" value="CsbD"/>
</dbReference>
<dbReference type="InterPro" id="IPR036629">
    <property type="entry name" value="YjbJ_sf"/>
</dbReference>
<dbReference type="Pfam" id="PF05532">
    <property type="entry name" value="CsbD"/>
    <property type="match status" value="1"/>
</dbReference>
<dbReference type="SUPFAM" id="SSF69047">
    <property type="entry name" value="Hypothetical protein YjbJ"/>
    <property type="match status" value="1"/>
</dbReference>